<proteinExistence type="evidence at protein level"/>
<protein>
    <recommendedName>
        <fullName>Potassium channel toxin alpha-KTx 1.11</fullName>
    </recommendedName>
    <alternativeName>
        <fullName evidence="3">Slotoxin</fullName>
        <shortName evidence="3">SloTx</shortName>
    </alternativeName>
</protein>
<dbReference type="SMR" id="P0C182"/>
<dbReference type="GO" id="GO:0005576">
    <property type="term" value="C:extracellular region"/>
    <property type="evidence" value="ECO:0007669"/>
    <property type="project" value="UniProtKB-SubCell"/>
</dbReference>
<dbReference type="GO" id="GO:0008200">
    <property type="term" value="F:ion channel inhibitor activity"/>
    <property type="evidence" value="ECO:0007669"/>
    <property type="project" value="InterPro"/>
</dbReference>
<dbReference type="GO" id="GO:0015459">
    <property type="term" value="F:potassium channel regulator activity"/>
    <property type="evidence" value="ECO:0007669"/>
    <property type="project" value="UniProtKB-KW"/>
</dbReference>
<dbReference type="GO" id="GO:0090729">
    <property type="term" value="F:toxin activity"/>
    <property type="evidence" value="ECO:0007669"/>
    <property type="project" value="UniProtKB-KW"/>
</dbReference>
<dbReference type="Gene3D" id="3.30.30.10">
    <property type="entry name" value="Knottin, scorpion toxin-like"/>
    <property type="match status" value="1"/>
</dbReference>
<dbReference type="InterPro" id="IPR036574">
    <property type="entry name" value="Scorpion_toxin-like_sf"/>
</dbReference>
<dbReference type="InterPro" id="IPR001947">
    <property type="entry name" value="Scorpion_toxinS_K_inh"/>
</dbReference>
<dbReference type="Pfam" id="PF00451">
    <property type="entry name" value="Toxin_2"/>
    <property type="match status" value="1"/>
</dbReference>
<dbReference type="PRINTS" id="PR00286">
    <property type="entry name" value="CHARYBDTOXIN"/>
</dbReference>
<dbReference type="SUPFAM" id="SSF57095">
    <property type="entry name" value="Scorpion toxin-like"/>
    <property type="match status" value="1"/>
</dbReference>
<dbReference type="PROSITE" id="PS01138">
    <property type="entry name" value="SCORP_SHORT_TOXIN"/>
    <property type="match status" value="1"/>
</dbReference>
<evidence type="ECO:0000250" key="1"/>
<evidence type="ECO:0000269" key="2">
    <source>
    </source>
</evidence>
<evidence type="ECO:0000303" key="3">
    <source>
    </source>
</evidence>
<evidence type="ECO:0000305" key="4"/>
<evidence type="ECO:0000305" key="5">
    <source>
    </source>
</evidence>
<feature type="chain" id="PRO_0000228823" description="Potassium channel toxin alpha-KTx 1.11">
    <location>
        <begin position="1"/>
        <end position="37"/>
    </location>
</feature>
<feature type="site" description="Basic residue of the functional dyad" evidence="1">
    <location>
        <position position="27"/>
    </location>
</feature>
<feature type="site" description="Aromatic residue of the functional dyad" evidence="1">
    <location>
        <position position="36"/>
    </location>
</feature>
<feature type="disulfide bond" evidence="1">
    <location>
        <begin position="7"/>
        <end position="28"/>
    </location>
</feature>
<feature type="disulfide bond" evidence="1">
    <location>
        <begin position="13"/>
        <end position="33"/>
    </location>
</feature>
<feature type="disulfide bond" evidence="1">
    <location>
        <begin position="17"/>
        <end position="35"/>
    </location>
</feature>
<organism>
    <name type="scientific">Centruroides noxius</name>
    <name type="common">Mexican scorpion</name>
    <dbReference type="NCBI Taxonomy" id="6878"/>
    <lineage>
        <taxon>Eukaryota</taxon>
        <taxon>Metazoa</taxon>
        <taxon>Ecdysozoa</taxon>
        <taxon>Arthropoda</taxon>
        <taxon>Chelicerata</taxon>
        <taxon>Arachnida</taxon>
        <taxon>Scorpiones</taxon>
        <taxon>Buthida</taxon>
        <taxon>Buthoidea</taxon>
        <taxon>Buthidae</taxon>
        <taxon>Centruroides</taxon>
    </lineage>
</organism>
<keyword id="KW-1221">Calcium-activated potassium channel impairing toxin</keyword>
<keyword id="KW-0903">Direct protein sequencing</keyword>
<keyword id="KW-1015">Disulfide bond</keyword>
<keyword id="KW-0872">Ion channel impairing toxin</keyword>
<keyword id="KW-0528">Neurotoxin</keyword>
<keyword id="KW-0632">Potassium channel impairing toxin</keyword>
<keyword id="KW-0964">Secreted</keyword>
<keyword id="KW-0800">Toxin</keyword>
<sequence>TFIDVDCTVSKECWAPCKAAFGVDRGKCMGKKCKCYV</sequence>
<comment type="function">
    <text evidence="2">Reversibly blocks the high conductance calcium-activated potassium channels composed of only alpha subunits (KCa1.1/KCNMA1). Unreversibly blocks the high conductance calcium-activated potassium channels composed of alpha and beta1 subunits (KCNMA1 and KCNMB1). Unreversibly and weakly blocks the high conductance calcium-activated potassium channels composed of alpha and beta4 (KCNMA1 and KCNMB4).</text>
</comment>
<comment type="subcellular location">
    <subcellularLocation>
        <location evidence="2">Secreted</location>
    </subcellularLocation>
</comment>
<comment type="tissue specificity">
    <text evidence="5">Expressed by the venom gland.</text>
</comment>
<comment type="domain">
    <text evidence="4">Has the structural arrangement of an alpha-helix connected to antiparallel beta-sheets by disulfide bonds (CS-alpha/beta).</text>
</comment>
<comment type="mass spectrometry"/>
<comment type="miscellaneous">
    <text evidence="2">Negative results: does not inhibit other potassium channels such as dSlo, Kv1.1/KCNA1, Kv11.1/KCNH2/ERG1, Kir2.2/KCNJ12, Shaker-IR, and voltage-independent/calcium-activated SK1/KCNN1, SK2/KCNN2 and SK3/KCNN3.</text>
</comment>
<comment type="similarity">
    <text evidence="4">Belongs to the short scorpion toxin superfamily. Potassium channel inhibitor family. Alpha-KTx 01 subfamily.</text>
</comment>
<name>KAX1B_CENNO</name>
<reference key="1">
    <citation type="journal article" date="2001" name="FEBS Lett.">
        <title>Slotoxin, alphaKTx1.11, a new scorpion peptide blocker of MaxiK channels that differentiates between alpha and alpha+beta (beta1 or beta4) complexes.</title>
        <authorList>
            <person name="Garcia-Valdes J."/>
            <person name="Zamudio F.Z."/>
            <person name="Toro L."/>
            <person name="Possani L.D."/>
        </authorList>
    </citation>
    <scope>PROTEIN SEQUENCE</scope>
    <scope>FUNCTION</scope>
    <scope>MASS SPECTROMETRY</scope>
    <scope>ACTIVITY PROFILE</scope>
    <scope>SUBCELLULAR LOCATION</scope>
    <source>
        <tissue>Venom</tissue>
    </source>
</reference>
<reference key="2">
    <citation type="journal article" date="2001" name="FEBS Lett.">
        <authorList>
            <person name="Garcia-Valdes J."/>
            <person name="Zamudio F.Z."/>
            <person name="Toro L."/>
            <person name="Possani L.D."/>
        </authorList>
    </citation>
    <scope>ERRATUM OF PUBMED:11576530</scope>
</reference>
<accession>P0C182</accession>